<name>CD70_MOUSE</name>
<proteinExistence type="evidence at protein level"/>
<gene>
    <name evidence="8" type="primary">Cd70</name>
    <name type="synonym">Cd27l</name>
    <name evidence="8" type="synonym">Cd27lg</name>
    <name evidence="8" type="synonym">Tnfsf7</name>
</gene>
<reference key="1">
    <citation type="journal article" date="1997" name="J. Immunol.">
        <title>Characterization of murine CD70, the ligand of the TNF receptor family member CD27.</title>
        <authorList>
            <person name="Tesselaar K."/>
            <person name="Gravestein L.A."/>
            <person name="van Schijndel G.M.W."/>
            <person name="Borst J."/>
            <person name="van Lier R.A.W."/>
        </authorList>
    </citation>
    <scope>NUCLEOTIDE SEQUENCE [GENOMIC DNA / MRNA]</scope>
    <scope>FUNCTION</scope>
    <scope>SUBUNIT</scope>
    <scope>SUBCELLULAR LOCATION</scope>
    <scope>INDUCTION</scope>
    <scope>TISSUE SPECIFICITY</scope>
    <scope>GLYCOSYLATION</scope>
    <source>
        <strain>129/SvJ</strain>
        <tissue>B-cell lymphoma</tissue>
    </source>
</reference>
<reference key="2">
    <citation type="journal article" date="1998" name="Int. Immunol.">
        <title>Characterization of murine CD70 by molecular cloning and mAb.</title>
        <authorList>
            <person name="Oshima H."/>
            <person name="Nakano H."/>
            <person name="Nohara C."/>
            <person name="Kobata T."/>
            <person name="Nakajima A."/>
            <person name="Jenkins N.A."/>
            <person name="Gilbert D.J."/>
            <person name="Copeland N.G."/>
            <person name="Muto T."/>
            <person name="Yagita H."/>
            <person name="Okumura K."/>
        </authorList>
    </citation>
    <scope>NUCLEOTIDE SEQUENCE [MRNA]</scope>
    <scope>FUNCTION</scope>
    <scope>SUBCELLULAR LOCATION</scope>
    <source>
        <strain>BALB/cJ</strain>
        <tissue>B-cell lymphoma</tissue>
    </source>
</reference>
<evidence type="ECO:0000255" key="1"/>
<evidence type="ECO:0000255" key="2">
    <source>
        <dbReference type="PROSITE-ProRule" id="PRU01387"/>
    </source>
</evidence>
<evidence type="ECO:0000269" key="3">
    <source>
    </source>
</evidence>
<evidence type="ECO:0000269" key="4">
    <source>
    </source>
</evidence>
<evidence type="ECO:0000303" key="5">
    <source>
    </source>
</evidence>
<evidence type="ECO:0000305" key="6"/>
<evidence type="ECO:0000305" key="7">
    <source>
    </source>
</evidence>
<evidence type="ECO:0000312" key="8">
    <source>
        <dbReference type="MGI" id="MGI:1195273"/>
    </source>
</evidence>
<protein>
    <recommendedName>
        <fullName evidence="7">CD70 antigen</fullName>
    </recommendedName>
    <alternativeName>
        <fullName evidence="5">CD27 ligand</fullName>
        <shortName evidence="5">CD27-L</shortName>
    </alternativeName>
    <alternativeName>
        <fullName evidence="8">Tumor necrosis factor ligand superfamily member 7</fullName>
    </alternativeName>
    <cdAntigenName>CD70</cdAntigenName>
</protein>
<sequence length="195" mass="21919">MPEEGRPCPWVRWSGTAFQRQWPWLLLVVFITVFCCWFHCSGLLSKQQQRLLEHPEPHTAELQLNLTVPRKDPTLRWGAGPALGRSFTHGPELEEGHLRIHQDGLYRLHIQVTLANCSSPGSTLQHRATLAVGICSPAAHGISLLRGRFGQDCTVALQRLTYLVHGDVLCTNLTLPLLPSRNADETFFGVQWICP</sequence>
<accession>O55237</accession>
<feature type="chain" id="PRO_0000185498" description="CD70 antigen">
    <location>
        <begin position="1"/>
        <end position="195"/>
    </location>
</feature>
<feature type="topological domain" description="Cytoplasmic" evidence="1">
    <location>
        <begin position="1"/>
        <end position="23"/>
    </location>
</feature>
<feature type="transmembrane region" description="Helical; Signal-anchor for type II membrane protein" evidence="1">
    <location>
        <begin position="24"/>
        <end position="44"/>
    </location>
</feature>
<feature type="topological domain" description="Extracellular" evidence="1">
    <location>
        <begin position="45"/>
        <end position="195"/>
    </location>
</feature>
<feature type="domain" description="THD" evidence="2">
    <location>
        <begin position="58"/>
        <end position="193"/>
    </location>
</feature>
<feature type="glycosylation site" description="N-linked (GlcNAc...) asparagine" evidence="1">
    <location>
        <position position="65"/>
    </location>
</feature>
<feature type="glycosylation site" description="N-linked (GlcNAc...) asparagine" evidence="1">
    <location>
        <position position="116"/>
    </location>
</feature>
<feature type="glycosylation site" description="N-linked (GlcNAc...) asparagine" evidence="1">
    <location>
        <position position="172"/>
    </location>
</feature>
<feature type="disulfide bond" evidence="2">
    <location>
        <begin position="117"/>
        <end position="153"/>
    </location>
</feature>
<feature type="disulfide bond" evidence="2">
    <location>
        <begin position="135"/>
        <end position="170"/>
    </location>
</feature>
<comment type="function">
    <text evidence="3 4">Expressed at the plasma membrane of B cells, it is the ligand of the CD27 receptor which is specifically expressed at the surface of T cells. The CD70-CD27 signaling pathway mediates antigen-specific T cell activation and expansion which in turn provides immune surveillance of B cells.</text>
</comment>
<comment type="subunit">
    <text evidence="3">Homotrimer.</text>
</comment>
<comment type="subcellular location">
    <subcellularLocation>
        <location evidence="3 4">Cell membrane</location>
        <topology evidence="1">Single-pass type II membrane protein</topology>
    </subcellularLocation>
</comment>
<comment type="tissue specificity">
    <text evidence="3">Very low level of expression. Detected in splenocytes and thymocytes.</text>
</comment>
<comment type="induction">
    <text evidence="3">By IL-2 and concanavalin A (Con A).</text>
</comment>
<comment type="PTM">
    <text evidence="3">N-glycosylated.</text>
</comment>
<comment type="similarity">
    <text evidence="6">Belongs to the tumor necrosis factor family.</text>
</comment>
<keyword id="KW-1003">Cell membrane</keyword>
<keyword id="KW-1015">Disulfide bond</keyword>
<keyword id="KW-0325">Glycoprotein</keyword>
<keyword id="KW-0472">Membrane</keyword>
<keyword id="KW-1185">Reference proteome</keyword>
<keyword id="KW-0735">Signal-anchor</keyword>
<keyword id="KW-0812">Transmembrane</keyword>
<keyword id="KW-1133">Transmembrane helix</keyword>
<dbReference type="EMBL" id="Y13637">
    <property type="protein sequence ID" value="CAA73977.1"/>
    <property type="molecule type" value="Genomic_DNA"/>
</dbReference>
<dbReference type="EMBL" id="Y13638">
    <property type="protein sequence ID" value="CAA73977.1"/>
    <property type="status" value="JOINED"/>
    <property type="molecule type" value="Genomic_DNA"/>
</dbReference>
<dbReference type="EMBL" id="Y13636">
    <property type="protein sequence ID" value="CAA73976.1"/>
    <property type="molecule type" value="mRNA"/>
</dbReference>
<dbReference type="EMBL" id="U78091">
    <property type="protein sequence ID" value="AAD00274.1"/>
    <property type="molecule type" value="mRNA"/>
</dbReference>
<dbReference type="CCDS" id="CCDS28927.1"/>
<dbReference type="RefSeq" id="NP_035747.1">
    <property type="nucleotide sequence ID" value="NM_011617.2"/>
</dbReference>
<dbReference type="SMR" id="O55237"/>
<dbReference type="FunCoup" id="O55237">
    <property type="interactions" value="858"/>
</dbReference>
<dbReference type="STRING" id="10090.ENSMUSP00000019633"/>
<dbReference type="GlyCosmos" id="O55237">
    <property type="glycosylation" value="3 sites, No reported glycans"/>
</dbReference>
<dbReference type="GlyGen" id="O55237">
    <property type="glycosylation" value="3 sites, 3 N-linked glycans (3 sites)"/>
</dbReference>
<dbReference type="PhosphoSitePlus" id="O55237"/>
<dbReference type="PaxDb" id="10090-ENSMUSP00000019633"/>
<dbReference type="ProteomicsDB" id="283752"/>
<dbReference type="Antibodypedia" id="24212">
    <property type="antibodies" value="1013 antibodies from 41 providers"/>
</dbReference>
<dbReference type="DNASU" id="21948"/>
<dbReference type="Ensembl" id="ENSMUST00000019633.8">
    <property type="protein sequence ID" value="ENSMUSP00000019633.8"/>
    <property type="gene ID" value="ENSMUSG00000019489.8"/>
</dbReference>
<dbReference type="GeneID" id="21948"/>
<dbReference type="KEGG" id="mmu:21948"/>
<dbReference type="UCSC" id="uc008dee.1">
    <property type="organism name" value="mouse"/>
</dbReference>
<dbReference type="AGR" id="MGI:1195273"/>
<dbReference type="CTD" id="970"/>
<dbReference type="MGI" id="MGI:1195273">
    <property type="gene designation" value="Cd70"/>
</dbReference>
<dbReference type="VEuPathDB" id="HostDB:ENSMUSG00000019489"/>
<dbReference type="eggNOG" id="ENOG502TEKD">
    <property type="taxonomic scope" value="Eukaryota"/>
</dbReference>
<dbReference type="GeneTree" id="ENSGT00390000006744"/>
<dbReference type="HOGENOM" id="CLU_114585_0_0_1"/>
<dbReference type="InParanoid" id="O55237"/>
<dbReference type="OMA" id="FGIQWVH"/>
<dbReference type="OrthoDB" id="9444364at2759"/>
<dbReference type="PhylomeDB" id="O55237"/>
<dbReference type="TreeFam" id="TF338269"/>
<dbReference type="Reactome" id="R-MMU-5669034">
    <property type="pathway name" value="TNFs bind their physiological receptors"/>
</dbReference>
<dbReference type="BioGRID-ORCS" id="21948">
    <property type="hits" value="3 hits in 82 CRISPR screens"/>
</dbReference>
<dbReference type="PRO" id="PR:O55237"/>
<dbReference type="Proteomes" id="UP000000589">
    <property type="component" value="Chromosome 17"/>
</dbReference>
<dbReference type="RNAct" id="O55237">
    <property type="molecule type" value="protein"/>
</dbReference>
<dbReference type="Bgee" id="ENSMUSG00000019489">
    <property type="expression patterns" value="Expressed in mesodermal cell in embryo and 20 other cell types or tissues"/>
</dbReference>
<dbReference type="ExpressionAtlas" id="O55237">
    <property type="expression patterns" value="baseline and differential"/>
</dbReference>
<dbReference type="GO" id="GO:0005886">
    <property type="term" value="C:plasma membrane"/>
    <property type="evidence" value="ECO:0000314"/>
    <property type="project" value="UniProtKB"/>
</dbReference>
<dbReference type="GO" id="GO:0048018">
    <property type="term" value="F:receptor ligand activity"/>
    <property type="evidence" value="ECO:0000314"/>
    <property type="project" value="UniProtKB"/>
</dbReference>
<dbReference type="GO" id="GO:0005164">
    <property type="term" value="F:tumor necrosis factor receptor binding"/>
    <property type="evidence" value="ECO:0007669"/>
    <property type="project" value="InterPro"/>
</dbReference>
<dbReference type="GO" id="GO:0090717">
    <property type="term" value="P:adaptive immune memory response involving T cells and B cells"/>
    <property type="evidence" value="ECO:0000250"/>
    <property type="project" value="UniProtKB"/>
</dbReference>
<dbReference type="GO" id="GO:0019724">
    <property type="term" value="P:B cell mediated immunity"/>
    <property type="evidence" value="ECO:0000250"/>
    <property type="project" value="UniProtKB"/>
</dbReference>
<dbReference type="GO" id="GO:0042100">
    <property type="term" value="P:B cell proliferation"/>
    <property type="evidence" value="ECO:0000250"/>
    <property type="project" value="UniProtKB"/>
</dbReference>
<dbReference type="GO" id="GO:0160162">
    <property type="term" value="P:CD27 signaling pathway"/>
    <property type="evidence" value="ECO:0000250"/>
    <property type="project" value="UniProtKB"/>
</dbReference>
<dbReference type="GO" id="GO:0097191">
    <property type="term" value="P:extrinsic apoptotic signaling pathway"/>
    <property type="evidence" value="ECO:0007669"/>
    <property type="project" value="Ensembl"/>
</dbReference>
<dbReference type="GO" id="GO:0002456">
    <property type="term" value="P:T cell mediated immunity"/>
    <property type="evidence" value="ECO:0007669"/>
    <property type="project" value="Ensembl"/>
</dbReference>
<dbReference type="GO" id="GO:0042098">
    <property type="term" value="P:T cell proliferation"/>
    <property type="evidence" value="ECO:0000314"/>
    <property type="project" value="UniProtKB"/>
</dbReference>
<dbReference type="GO" id="GO:0033209">
    <property type="term" value="P:tumor necrosis factor-mediated signaling pathway"/>
    <property type="evidence" value="ECO:0007669"/>
    <property type="project" value="InterPro"/>
</dbReference>
<dbReference type="CDD" id="cd00184">
    <property type="entry name" value="TNF"/>
    <property type="match status" value="1"/>
</dbReference>
<dbReference type="FunFam" id="2.60.120.40:FF:000027">
    <property type="entry name" value="CD70 antigen"/>
    <property type="match status" value="1"/>
</dbReference>
<dbReference type="Gene3D" id="2.60.120.40">
    <property type="match status" value="1"/>
</dbReference>
<dbReference type="InterPro" id="IPR042374">
    <property type="entry name" value="CD70"/>
</dbReference>
<dbReference type="InterPro" id="IPR006052">
    <property type="entry name" value="TNF_dom"/>
</dbReference>
<dbReference type="InterPro" id="IPR008983">
    <property type="entry name" value="Tumour_necrosis_fac-like_dom"/>
</dbReference>
<dbReference type="PANTHER" id="PTHR15152">
    <property type="entry name" value="CD70 ANTIGEN"/>
    <property type="match status" value="1"/>
</dbReference>
<dbReference type="PANTHER" id="PTHR15152:SF0">
    <property type="entry name" value="CD70 ANTIGEN"/>
    <property type="match status" value="1"/>
</dbReference>
<dbReference type="Pfam" id="PF00229">
    <property type="entry name" value="TNF"/>
    <property type="match status" value="1"/>
</dbReference>
<dbReference type="SMART" id="SM00207">
    <property type="entry name" value="TNF"/>
    <property type="match status" value="1"/>
</dbReference>
<dbReference type="SUPFAM" id="SSF49842">
    <property type="entry name" value="TNF-like"/>
    <property type="match status" value="1"/>
</dbReference>
<dbReference type="PROSITE" id="PS50049">
    <property type="entry name" value="THD_2"/>
    <property type="match status" value="1"/>
</dbReference>
<organism>
    <name type="scientific">Mus musculus</name>
    <name type="common">Mouse</name>
    <dbReference type="NCBI Taxonomy" id="10090"/>
    <lineage>
        <taxon>Eukaryota</taxon>
        <taxon>Metazoa</taxon>
        <taxon>Chordata</taxon>
        <taxon>Craniata</taxon>
        <taxon>Vertebrata</taxon>
        <taxon>Euteleostomi</taxon>
        <taxon>Mammalia</taxon>
        <taxon>Eutheria</taxon>
        <taxon>Euarchontoglires</taxon>
        <taxon>Glires</taxon>
        <taxon>Rodentia</taxon>
        <taxon>Myomorpha</taxon>
        <taxon>Muroidea</taxon>
        <taxon>Muridae</taxon>
        <taxon>Murinae</taxon>
        <taxon>Mus</taxon>
        <taxon>Mus</taxon>
    </lineage>
</organism>